<organism>
    <name type="scientific">Oleidesulfovibrio alaskensis (strain ATCC BAA-1058 / DSM 17464 / G20)</name>
    <name type="common">Desulfovibrio alaskensis</name>
    <dbReference type="NCBI Taxonomy" id="207559"/>
    <lineage>
        <taxon>Bacteria</taxon>
        <taxon>Pseudomonadati</taxon>
        <taxon>Thermodesulfobacteriota</taxon>
        <taxon>Desulfovibrionia</taxon>
        <taxon>Desulfovibrionales</taxon>
        <taxon>Desulfovibrionaceae</taxon>
        <taxon>Oleidesulfovibrio</taxon>
    </lineage>
</organism>
<comment type="function">
    <text evidence="1">Necessary for normal cell division and for the maintenance of normal septation.</text>
</comment>
<comment type="cofactor">
    <cofactor evidence="1">
        <name>Mg(2+)</name>
        <dbReference type="ChEBI" id="CHEBI:18420"/>
    </cofactor>
</comment>
<comment type="similarity">
    <text evidence="1">Belongs to the TRAFAC class TrmE-Era-EngA-EngB-Septin-like GTPase superfamily. EngB GTPase family.</text>
</comment>
<accession>Q30ZZ9</accession>
<dbReference type="EMBL" id="CP000112">
    <property type="protein sequence ID" value="ABB38747.1"/>
    <property type="molecule type" value="Genomic_DNA"/>
</dbReference>
<dbReference type="RefSeq" id="WP_011367865.1">
    <property type="nucleotide sequence ID" value="NC_007519.1"/>
</dbReference>
<dbReference type="SMR" id="Q30ZZ9"/>
<dbReference type="STRING" id="207559.Dde_1950"/>
<dbReference type="KEGG" id="dde:Dde_1950"/>
<dbReference type="eggNOG" id="COG0218">
    <property type="taxonomic scope" value="Bacteria"/>
</dbReference>
<dbReference type="HOGENOM" id="CLU_033732_3_0_7"/>
<dbReference type="Proteomes" id="UP000002710">
    <property type="component" value="Chromosome"/>
</dbReference>
<dbReference type="GO" id="GO:0005829">
    <property type="term" value="C:cytosol"/>
    <property type="evidence" value="ECO:0007669"/>
    <property type="project" value="TreeGrafter"/>
</dbReference>
<dbReference type="GO" id="GO:0005525">
    <property type="term" value="F:GTP binding"/>
    <property type="evidence" value="ECO:0007669"/>
    <property type="project" value="UniProtKB-UniRule"/>
</dbReference>
<dbReference type="GO" id="GO:0046872">
    <property type="term" value="F:metal ion binding"/>
    <property type="evidence" value="ECO:0007669"/>
    <property type="project" value="UniProtKB-KW"/>
</dbReference>
<dbReference type="GO" id="GO:0000917">
    <property type="term" value="P:division septum assembly"/>
    <property type="evidence" value="ECO:0007669"/>
    <property type="project" value="UniProtKB-KW"/>
</dbReference>
<dbReference type="CDD" id="cd01876">
    <property type="entry name" value="YihA_EngB"/>
    <property type="match status" value="1"/>
</dbReference>
<dbReference type="Gene3D" id="3.40.50.300">
    <property type="entry name" value="P-loop containing nucleotide triphosphate hydrolases"/>
    <property type="match status" value="1"/>
</dbReference>
<dbReference type="HAMAP" id="MF_00321">
    <property type="entry name" value="GTPase_EngB"/>
    <property type="match status" value="1"/>
</dbReference>
<dbReference type="InterPro" id="IPR030393">
    <property type="entry name" value="G_ENGB_dom"/>
</dbReference>
<dbReference type="InterPro" id="IPR006073">
    <property type="entry name" value="GTP-bd"/>
</dbReference>
<dbReference type="InterPro" id="IPR019987">
    <property type="entry name" value="GTP-bd_ribosome_bio_YsxC"/>
</dbReference>
<dbReference type="InterPro" id="IPR027417">
    <property type="entry name" value="P-loop_NTPase"/>
</dbReference>
<dbReference type="NCBIfam" id="TIGR03598">
    <property type="entry name" value="GTPase_YsxC"/>
    <property type="match status" value="1"/>
</dbReference>
<dbReference type="PANTHER" id="PTHR11649:SF13">
    <property type="entry name" value="ENGB-TYPE G DOMAIN-CONTAINING PROTEIN"/>
    <property type="match status" value="1"/>
</dbReference>
<dbReference type="PANTHER" id="PTHR11649">
    <property type="entry name" value="MSS1/TRME-RELATED GTP-BINDING PROTEIN"/>
    <property type="match status" value="1"/>
</dbReference>
<dbReference type="Pfam" id="PF01926">
    <property type="entry name" value="MMR_HSR1"/>
    <property type="match status" value="1"/>
</dbReference>
<dbReference type="SUPFAM" id="SSF52540">
    <property type="entry name" value="P-loop containing nucleoside triphosphate hydrolases"/>
    <property type="match status" value="1"/>
</dbReference>
<dbReference type="PROSITE" id="PS51706">
    <property type="entry name" value="G_ENGB"/>
    <property type="match status" value="1"/>
</dbReference>
<protein>
    <recommendedName>
        <fullName evidence="1">Probable GTP-binding protein EngB</fullName>
    </recommendedName>
</protein>
<proteinExistence type="inferred from homology"/>
<gene>
    <name evidence="1" type="primary">engB</name>
    <name type="ordered locus">Dde_1950</name>
</gene>
<feature type="chain" id="PRO_0000266852" description="Probable GTP-binding protein EngB">
    <location>
        <begin position="1"/>
        <end position="218"/>
    </location>
</feature>
<feature type="domain" description="EngB-type G" evidence="1">
    <location>
        <begin position="21"/>
        <end position="192"/>
    </location>
</feature>
<feature type="region of interest" description="Disordered" evidence="2">
    <location>
        <begin position="194"/>
        <end position="218"/>
    </location>
</feature>
<feature type="binding site" evidence="1">
    <location>
        <begin position="29"/>
        <end position="36"/>
    </location>
    <ligand>
        <name>GTP</name>
        <dbReference type="ChEBI" id="CHEBI:37565"/>
    </ligand>
</feature>
<feature type="binding site" evidence="1">
    <location>
        <position position="36"/>
    </location>
    <ligand>
        <name>Mg(2+)</name>
        <dbReference type="ChEBI" id="CHEBI:18420"/>
    </ligand>
</feature>
<feature type="binding site" evidence="1">
    <location>
        <begin position="56"/>
        <end position="60"/>
    </location>
    <ligand>
        <name>GTP</name>
        <dbReference type="ChEBI" id="CHEBI:37565"/>
    </ligand>
</feature>
<feature type="binding site" evidence="1">
    <location>
        <position position="58"/>
    </location>
    <ligand>
        <name>Mg(2+)</name>
        <dbReference type="ChEBI" id="CHEBI:18420"/>
    </ligand>
</feature>
<feature type="binding site" evidence="1">
    <location>
        <begin position="75"/>
        <end position="78"/>
    </location>
    <ligand>
        <name>GTP</name>
        <dbReference type="ChEBI" id="CHEBI:37565"/>
    </ligand>
</feature>
<feature type="binding site" evidence="1">
    <location>
        <begin position="142"/>
        <end position="145"/>
    </location>
    <ligand>
        <name>GTP</name>
        <dbReference type="ChEBI" id="CHEBI:37565"/>
    </ligand>
</feature>
<feature type="binding site" evidence="1">
    <location>
        <begin position="171"/>
        <end position="173"/>
    </location>
    <ligand>
        <name>GTP</name>
        <dbReference type="ChEBI" id="CHEBI:37565"/>
    </ligand>
</feature>
<keyword id="KW-0131">Cell cycle</keyword>
<keyword id="KW-0132">Cell division</keyword>
<keyword id="KW-0342">GTP-binding</keyword>
<keyword id="KW-0460">Magnesium</keyword>
<keyword id="KW-0479">Metal-binding</keyword>
<keyword id="KW-0547">Nucleotide-binding</keyword>
<keyword id="KW-1185">Reference proteome</keyword>
<keyword id="KW-0717">Septation</keyword>
<sequence>MQPKLVLENTIYTLEQLVSFNAPQIALAGRSNVGKSSLVNTLAGRKGLARTSSTPGKTRSINFYKVDPDGYYVVDLPGYGYARCSKAEREKWAKLIRRYLVETPAVCAIAILLDCRLSPQKLDVELAAFARQAGLPLLPVLTKADKCKQQERALRQREWRTILGGEVPLLFSSKTGMGKDKLWQELHRLAFPDMAFDTPSDGAPEPADEPEAASERAE</sequence>
<name>ENGB_OLEA2</name>
<reference key="1">
    <citation type="journal article" date="2011" name="J. Bacteriol.">
        <title>Complete genome sequence and updated annotation of Desulfovibrio alaskensis G20.</title>
        <authorList>
            <person name="Hauser L.J."/>
            <person name="Land M.L."/>
            <person name="Brown S.D."/>
            <person name="Larimer F."/>
            <person name="Keller K.L."/>
            <person name="Rapp-Giles B.J."/>
            <person name="Price M.N."/>
            <person name="Lin M."/>
            <person name="Bruce D.C."/>
            <person name="Detter J.C."/>
            <person name="Tapia R."/>
            <person name="Han C.S."/>
            <person name="Goodwin L.A."/>
            <person name="Cheng J.F."/>
            <person name="Pitluck S."/>
            <person name="Copeland A."/>
            <person name="Lucas S."/>
            <person name="Nolan M."/>
            <person name="Lapidus A.L."/>
            <person name="Palumbo A.V."/>
            <person name="Wall J.D."/>
        </authorList>
    </citation>
    <scope>NUCLEOTIDE SEQUENCE [LARGE SCALE GENOMIC DNA]</scope>
    <source>
        <strain>ATCC BAA-1058 / DSM 17464 / G20</strain>
    </source>
</reference>
<evidence type="ECO:0000255" key="1">
    <source>
        <dbReference type="HAMAP-Rule" id="MF_00321"/>
    </source>
</evidence>
<evidence type="ECO:0000256" key="2">
    <source>
        <dbReference type="SAM" id="MobiDB-lite"/>
    </source>
</evidence>